<comment type="function">
    <text evidence="1">Negatively regulates transcription of bacterial ribonucleotide reductase nrd genes and operons by binding to NrdR-boxes.</text>
</comment>
<comment type="cofactor">
    <cofactor evidence="1">
        <name>Zn(2+)</name>
        <dbReference type="ChEBI" id="CHEBI:29105"/>
    </cofactor>
    <text evidence="1">Binds 1 zinc ion.</text>
</comment>
<comment type="similarity">
    <text evidence="1">Belongs to the NrdR family.</text>
</comment>
<keyword id="KW-0067">ATP-binding</keyword>
<keyword id="KW-0238">DNA-binding</keyword>
<keyword id="KW-0479">Metal-binding</keyword>
<keyword id="KW-0547">Nucleotide-binding</keyword>
<keyword id="KW-0678">Repressor</keyword>
<keyword id="KW-0804">Transcription</keyword>
<keyword id="KW-0805">Transcription regulation</keyword>
<keyword id="KW-0862">Zinc</keyword>
<keyword id="KW-0863">Zinc-finger</keyword>
<dbReference type="EMBL" id="CU928164">
    <property type="protein sequence ID" value="CAR16403.1"/>
    <property type="molecule type" value="Genomic_DNA"/>
</dbReference>
<dbReference type="RefSeq" id="WP_000543535.1">
    <property type="nucleotide sequence ID" value="NC_011750.1"/>
</dbReference>
<dbReference type="RefSeq" id="YP_002406307.1">
    <property type="nucleotide sequence ID" value="NC_011750.1"/>
</dbReference>
<dbReference type="SMR" id="B7NJ84"/>
<dbReference type="STRING" id="585057.ECIAI39_0263"/>
<dbReference type="GeneID" id="93777047"/>
<dbReference type="KEGG" id="ect:ECIAI39_0263"/>
<dbReference type="PATRIC" id="fig|585057.6.peg.285"/>
<dbReference type="HOGENOM" id="CLU_108412_0_0_6"/>
<dbReference type="Proteomes" id="UP000000749">
    <property type="component" value="Chromosome"/>
</dbReference>
<dbReference type="GO" id="GO:0005524">
    <property type="term" value="F:ATP binding"/>
    <property type="evidence" value="ECO:0007669"/>
    <property type="project" value="UniProtKB-KW"/>
</dbReference>
<dbReference type="GO" id="GO:0003677">
    <property type="term" value="F:DNA binding"/>
    <property type="evidence" value="ECO:0007669"/>
    <property type="project" value="UniProtKB-KW"/>
</dbReference>
<dbReference type="GO" id="GO:0008270">
    <property type="term" value="F:zinc ion binding"/>
    <property type="evidence" value="ECO:0007669"/>
    <property type="project" value="UniProtKB-UniRule"/>
</dbReference>
<dbReference type="GO" id="GO:0045892">
    <property type="term" value="P:negative regulation of DNA-templated transcription"/>
    <property type="evidence" value="ECO:0007669"/>
    <property type="project" value="UniProtKB-UniRule"/>
</dbReference>
<dbReference type="HAMAP" id="MF_00440">
    <property type="entry name" value="NrdR"/>
    <property type="match status" value="1"/>
</dbReference>
<dbReference type="InterPro" id="IPR005144">
    <property type="entry name" value="ATP-cone_dom"/>
</dbReference>
<dbReference type="InterPro" id="IPR055173">
    <property type="entry name" value="NrdR-like_N"/>
</dbReference>
<dbReference type="InterPro" id="IPR003796">
    <property type="entry name" value="RNR_NrdR-like"/>
</dbReference>
<dbReference type="NCBIfam" id="TIGR00244">
    <property type="entry name" value="transcriptional regulator NrdR"/>
    <property type="match status" value="1"/>
</dbReference>
<dbReference type="PANTHER" id="PTHR30455">
    <property type="entry name" value="TRANSCRIPTIONAL REPRESSOR NRDR"/>
    <property type="match status" value="1"/>
</dbReference>
<dbReference type="PANTHER" id="PTHR30455:SF2">
    <property type="entry name" value="TRANSCRIPTIONAL REPRESSOR NRDR"/>
    <property type="match status" value="1"/>
</dbReference>
<dbReference type="Pfam" id="PF03477">
    <property type="entry name" value="ATP-cone"/>
    <property type="match status" value="1"/>
</dbReference>
<dbReference type="Pfam" id="PF22811">
    <property type="entry name" value="Zn_ribbon_NrdR"/>
    <property type="match status" value="1"/>
</dbReference>
<dbReference type="PROSITE" id="PS51161">
    <property type="entry name" value="ATP_CONE"/>
    <property type="match status" value="1"/>
</dbReference>
<proteinExistence type="inferred from homology"/>
<gene>
    <name evidence="1" type="primary">nrdR</name>
    <name type="ordered locus">ECIAI39_0263</name>
</gene>
<feature type="chain" id="PRO_1000124500" description="Transcriptional repressor NrdR">
    <location>
        <begin position="1"/>
        <end position="149"/>
    </location>
</feature>
<feature type="domain" description="ATP-cone" evidence="1">
    <location>
        <begin position="49"/>
        <end position="139"/>
    </location>
</feature>
<feature type="zinc finger region" evidence="1">
    <location>
        <begin position="3"/>
        <end position="34"/>
    </location>
</feature>
<protein>
    <recommendedName>
        <fullName evidence="1">Transcriptional repressor NrdR</fullName>
    </recommendedName>
</protein>
<name>NRDR_ECO7I</name>
<sequence>MHCPFCFAVDTKVIDSRLVGEGSSVRRRRQCLVCNERFTTFEVAELVMPRVVKSNDVREPFNEEKLRSGMLRALEKRPVSSDDVEMAINHIKSQLRATGEREVPSKMIGNLVMEQLKKLDKVAYIRFASVYRSFEDIKEFGEEIARLED</sequence>
<accession>B7NJ84</accession>
<evidence type="ECO:0000255" key="1">
    <source>
        <dbReference type="HAMAP-Rule" id="MF_00440"/>
    </source>
</evidence>
<reference key="1">
    <citation type="journal article" date="2009" name="PLoS Genet.">
        <title>Organised genome dynamics in the Escherichia coli species results in highly diverse adaptive paths.</title>
        <authorList>
            <person name="Touchon M."/>
            <person name="Hoede C."/>
            <person name="Tenaillon O."/>
            <person name="Barbe V."/>
            <person name="Baeriswyl S."/>
            <person name="Bidet P."/>
            <person name="Bingen E."/>
            <person name="Bonacorsi S."/>
            <person name="Bouchier C."/>
            <person name="Bouvet O."/>
            <person name="Calteau A."/>
            <person name="Chiapello H."/>
            <person name="Clermont O."/>
            <person name="Cruveiller S."/>
            <person name="Danchin A."/>
            <person name="Diard M."/>
            <person name="Dossat C."/>
            <person name="Karoui M.E."/>
            <person name="Frapy E."/>
            <person name="Garry L."/>
            <person name="Ghigo J.M."/>
            <person name="Gilles A.M."/>
            <person name="Johnson J."/>
            <person name="Le Bouguenec C."/>
            <person name="Lescat M."/>
            <person name="Mangenot S."/>
            <person name="Martinez-Jehanne V."/>
            <person name="Matic I."/>
            <person name="Nassif X."/>
            <person name="Oztas S."/>
            <person name="Petit M.A."/>
            <person name="Pichon C."/>
            <person name="Rouy Z."/>
            <person name="Ruf C.S."/>
            <person name="Schneider D."/>
            <person name="Tourret J."/>
            <person name="Vacherie B."/>
            <person name="Vallenet D."/>
            <person name="Medigue C."/>
            <person name="Rocha E.P.C."/>
            <person name="Denamur E."/>
        </authorList>
    </citation>
    <scope>NUCLEOTIDE SEQUENCE [LARGE SCALE GENOMIC DNA]</scope>
    <source>
        <strain>IAI39 / ExPEC</strain>
    </source>
</reference>
<organism>
    <name type="scientific">Escherichia coli O7:K1 (strain IAI39 / ExPEC)</name>
    <dbReference type="NCBI Taxonomy" id="585057"/>
    <lineage>
        <taxon>Bacteria</taxon>
        <taxon>Pseudomonadati</taxon>
        <taxon>Pseudomonadota</taxon>
        <taxon>Gammaproteobacteria</taxon>
        <taxon>Enterobacterales</taxon>
        <taxon>Enterobacteriaceae</taxon>
        <taxon>Escherichia</taxon>
    </lineage>
</organism>